<protein>
    <recommendedName>
        <fullName evidence="1">Peptidase T</fullName>
        <ecNumber evidence="1">3.4.11.4</ecNumber>
    </recommendedName>
    <alternativeName>
        <fullName evidence="1">Aminotripeptidase</fullName>
        <shortName evidence="1">Tripeptidase</shortName>
    </alternativeName>
    <alternativeName>
        <fullName evidence="1">Tripeptide aminopeptidase</fullName>
    </alternativeName>
</protein>
<keyword id="KW-0031">Aminopeptidase</keyword>
<keyword id="KW-0963">Cytoplasm</keyword>
<keyword id="KW-0378">Hydrolase</keyword>
<keyword id="KW-0479">Metal-binding</keyword>
<keyword id="KW-0482">Metalloprotease</keyword>
<keyword id="KW-0645">Protease</keyword>
<keyword id="KW-1185">Reference proteome</keyword>
<keyword id="KW-0862">Zinc</keyword>
<gene>
    <name evidence="1" type="primary">pepT</name>
    <name type="ordered locus">BDI_0311</name>
</gene>
<comment type="function">
    <text evidence="1">Cleaves the N-terminal amino acid of tripeptides.</text>
</comment>
<comment type="catalytic activity">
    <reaction evidence="1">
        <text>Release of the N-terminal residue from a tripeptide.</text>
        <dbReference type="EC" id="3.4.11.4"/>
    </reaction>
</comment>
<comment type="cofactor">
    <cofactor evidence="1">
        <name>Zn(2+)</name>
        <dbReference type="ChEBI" id="CHEBI:29105"/>
    </cofactor>
    <text evidence="1">Binds 2 Zn(2+) ions per subunit.</text>
</comment>
<comment type="subcellular location">
    <subcellularLocation>
        <location evidence="1">Cytoplasm</location>
    </subcellularLocation>
</comment>
<comment type="similarity">
    <text evidence="1">Belongs to the peptidase M20B family.</text>
</comment>
<organism>
    <name type="scientific">Parabacteroides distasonis (strain ATCC 8503 / DSM 20701 / CIP 104284 / JCM 5825 / NCTC 11152)</name>
    <dbReference type="NCBI Taxonomy" id="435591"/>
    <lineage>
        <taxon>Bacteria</taxon>
        <taxon>Pseudomonadati</taxon>
        <taxon>Bacteroidota</taxon>
        <taxon>Bacteroidia</taxon>
        <taxon>Bacteroidales</taxon>
        <taxon>Tannerellaceae</taxon>
        <taxon>Parabacteroides</taxon>
    </lineage>
</organism>
<accession>A6L8T2</accession>
<feature type="chain" id="PRO_1000129037" description="Peptidase T">
    <location>
        <begin position="1"/>
        <end position="406"/>
    </location>
</feature>
<feature type="active site" evidence="1">
    <location>
        <position position="79"/>
    </location>
</feature>
<feature type="active site" description="Proton acceptor" evidence="1">
    <location>
        <position position="173"/>
    </location>
</feature>
<feature type="binding site" evidence="1">
    <location>
        <position position="77"/>
    </location>
    <ligand>
        <name>Zn(2+)</name>
        <dbReference type="ChEBI" id="CHEBI:29105"/>
        <label>1</label>
    </ligand>
</feature>
<feature type="binding site" evidence="1">
    <location>
        <position position="139"/>
    </location>
    <ligand>
        <name>Zn(2+)</name>
        <dbReference type="ChEBI" id="CHEBI:29105"/>
        <label>1</label>
    </ligand>
</feature>
<feature type="binding site" evidence="1">
    <location>
        <position position="139"/>
    </location>
    <ligand>
        <name>Zn(2+)</name>
        <dbReference type="ChEBI" id="CHEBI:29105"/>
        <label>2</label>
    </ligand>
</feature>
<feature type="binding site" evidence="1">
    <location>
        <position position="174"/>
    </location>
    <ligand>
        <name>Zn(2+)</name>
        <dbReference type="ChEBI" id="CHEBI:29105"/>
        <label>2</label>
    </ligand>
</feature>
<feature type="binding site" evidence="1">
    <location>
        <position position="196"/>
    </location>
    <ligand>
        <name>Zn(2+)</name>
        <dbReference type="ChEBI" id="CHEBI:29105"/>
        <label>1</label>
    </ligand>
</feature>
<feature type="binding site" evidence="1">
    <location>
        <position position="377"/>
    </location>
    <ligand>
        <name>Zn(2+)</name>
        <dbReference type="ChEBI" id="CHEBI:29105"/>
        <label>2</label>
    </ligand>
</feature>
<name>PEPT_PARD8</name>
<reference key="1">
    <citation type="journal article" date="2007" name="PLoS Biol.">
        <title>Evolution of symbiotic bacteria in the distal human intestine.</title>
        <authorList>
            <person name="Xu J."/>
            <person name="Mahowald M.A."/>
            <person name="Ley R.E."/>
            <person name="Lozupone C.A."/>
            <person name="Hamady M."/>
            <person name="Martens E.C."/>
            <person name="Henrissat B."/>
            <person name="Coutinho P.M."/>
            <person name="Minx P."/>
            <person name="Latreille P."/>
            <person name="Cordum H."/>
            <person name="Van Brunt A."/>
            <person name="Kim K."/>
            <person name="Fulton R.S."/>
            <person name="Fulton L.A."/>
            <person name="Clifton S.W."/>
            <person name="Wilson R.K."/>
            <person name="Knight R.D."/>
            <person name="Gordon J.I."/>
        </authorList>
    </citation>
    <scope>NUCLEOTIDE SEQUENCE [LARGE SCALE GENOMIC DNA]</scope>
    <source>
        <strain>ATCC 8503 / DSM 20701 / CIP 104284 / JCM 5825 / NCTC 11152</strain>
    </source>
</reference>
<evidence type="ECO:0000255" key="1">
    <source>
        <dbReference type="HAMAP-Rule" id="MF_00550"/>
    </source>
</evidence>
<dbReference type="EC" id="3.4.11.4" evidence="1"/>
<dbReference type="EMBL" id="CP000140">
    <property type="protein sequence ID" value="ABR42096.1"/>
    <property type="molecule type" value="Genomic_DNA"/>
</dbReference>
<dbReference type="RefSeq" id="WP_005861913.1">
    <property type="nucleotide sequence ID" value="NZ_LR215978.1"/>
</dbReference>
<dbReference type="SMR" id="A6L8T2"/>
<dbReference type="STRING" id="435591.BDI_0311"/>
<dbReference type="MEROPS" id="M20.003"/>
<dbReference type="PaxDb" id="435591-BDI_0311"/>
<dbReference type="KEGG" id="pdi:BDI_0311"/>
<dbReference type="eggNOG" id="COG2195">
    <property type="taxonomic scope" value="Bacteria"/>
</dbReference>
<dbReference type="HOGENOM" id="CLU_053676_0_0_10"/>
<dbReference type="BioCyc" id="PDIS435591:G1G5A-321-MONOMER"/>
<dbReference type="Proteomes" id="UP000000566">
    <property type="component" value="Chromosome"/>
</dbReference>
<dbReference type="GO" id="GO:0005829">
    <property type="term" value="C:cytosol"/>
    <property type="evidence" value="ECO:0007669"/>
    <property type="project" value="TreeGrafter"/>
</dbReference>
<dbReference type="GO" id="GO:0008237">
    <property type="term" value="F:metallopeptidase activity"/>
    <property type="evidence" value="ECO:0007669"/>
    <property type="project" value="UniProtKB-KW"/>
</dbReference>
<dbReference type="GO" id="GO:0045148">
    <property type="term" value="F:tripeptide aminopeptidase activity"/>
    <property type="evidence" value="ECO:0007669"/>
    <property type="project" value="UniProtKB-UniRule"/>
</dbReference>
<dbReference type="GO" id="GO:0008270">
    <property type="term" value="F:zinc ion binding"/>
    <property type="evidence" value="ECO:0007669"/>
    <property type="project" value="UniProtKB-UniRule"/>
</dbReference>
<dbReference type="GO" id="GO:0043171">
    <property type="term" value="P:peptide catabolic process"/>
    <property type="evidence" value="ECO:0007669"/>
    <property type="project" value="UniProtKB-UniRule"/>
</dbReference>
<dbReference type="GO" id="GO:0006508">
    <property type="term" value="P:proteolysis"/>
    <property type="evidence" value="ECO:0007669"/>
    <property type="project" value="UniProtKB-UniRule"/>
</dbReference>
<dbReference type="CDD" id="cd03892">
    <property type="entry name" value="M20_peptT"/>
    <property type="match status" value="1"/>
</dbReference>
<dbReference type="Gene3D" id="3.30.70.360">
    <property type="match status" value="1"/>
</dbReference>
<dbReference type="Gene3D" id="3.40.630.10">
    <property type="entry name" value="Zn peptidases"/>
    <property type="match status" value="1"/>
</dbReference>
<dbReference type="HAMAP" id="MF_00550">
    <property type="entry name" value="Aminopeptidase_M20"/>
    <property type="match status" value="1"/>
</dbReference>
<dbReference type="InterPro" id="IPR001261">
    <property type="entry name" value="ArgE/DapE_CS"/>
</dbReference>
<dbReference type="InterPro" id="IPR036264">
    <property type="entry name" value="Bact_exopeptidase_dim_dom"/>
</dbReference>
<dbReference type="InterPro" id="IPR002933">
    <property type="entry name" value="Peptidase_M20"/>
</dbReference>
<dbReference type="InterPro" id="IPR011650">
    <property type="entry name" value="Peptidase_M20_dimer"/>
</dbReference>
<dbReference type="InterPro" id="IPR010161">
    <property type="entry name" value="Peptidase_M20B"/>
</dbReference>
<dbReference type="NCBIfam" id="TIGR01882">
    <property type="entry name" value="peptidase-T"/>
    <property type="match status" value="1"/>
</dbReference>
<dbReference type="NCBIfam" id="NF003976">
    <property type="entry name" value="PRK05469.1"/>
    <property type="match status" value="1"/>
</dbReference>
<dbReference type="NCBIfam" id="NF009920">
    <property type="entry name" value="PRK13381.1"/>
    <property type="match status" value="1"/>
</dbReference>
<dbReference type="PANTHER" id="PTHR42994">
    <property type="entry name" value="PEPTIDASE T"/>
    <property type="match status" value="1"/>
</dbReference>
<dbReference type="PANTHER" id="PTHR42994:SF1">
    <property type="entry name" value="PEPTIDASE T"/>
    <property type="match status" value="1"/>
</dbReference>
<dbReference type="Pfam" id="PF07687">
    <property type="entry name" value="M20_dimer"/>
    <property type="match status" value="1"/>
</dbReference>
<dbReference type="Pfam" id="PF01546">
    <property type="entry name" value="Peptidase_M20"/>
    <property type="match status" value="1"/>
</dbReference>
<dbReference type="PIRSF" id="PIRSF037215">
    <property type="entry name" value="Peptidase_M20B"/>
    <property type="match status" value="1"/>
</dbReference>
<dbReference type="SUPFAM" id="SSF55031">
    <property type="entry name" value="Bacterial exopeptidase dimerisation domain"/>
    <property type="match status" value="1"/>
</dbReference>
<dbReference type="SUPFAM" id="SSF53187">
    <property type="entry name" value="Zn-dependent exopeptidases"/>
    <property type="match status" value="1"/>
</dbReference>
<dbReference type="PROSITE" id="PS00758">
    <property type="entry name" value="ARGE_DAPE_CPG2_1"/>
    <property type="match status" value="1"/>
</dbReference>
<dbReference type="PROSITE" id="PS00759">
    <property type="entry name" value="ARGE_DAPE_CPG2_2"/>
    <property type="match status" value="1"/>
</dbReference>
<proteinExistence type="inferred from homology"/>
<sequence length="406" mass="45073">MTVLDRFLKYVTFDTQSNEETGTTPSTPGQRVFAEALVKELEAIGMEEISLDENSYVMATLPANTDEKIPTIGFIAHLDTSPDMSGKNVQPRIVTYLGGDIVLDAEENVVLSQSMFPELSDYKGQDIIVTNGKTLLGADDKGGVAAIVASMQYLKDHPEIKHGKIRIAFTPDEEIGQGADHFDVEKFGCDWGYTIDGGQIGELEYENFNAAGAKIIFKGLNVHPGYAKDKMQNASLRAIEFASWLPAEQRPEHTTGYEGFFHLTGMTGSVEEATLSYIIRDHDRKLFEEKKELLRTLVDKMNEAHPGCAHLELRDQYYNMREVVEPQKHIVDLAFEAMTSVGVEPIVKPIRGGTDGARLSFMGLPCPNIFAGGLNFHGRYEFLPVRSLEKSMETVIKIIELSARKS</sequence>